<gene>
    <name evidence="2" type="primary">Yog1</name>
    <name type="ORF">LEMA_P002680</name>
</gene>
<evidence type="ECO:0000269" key="1">
    <source>
    </source>
</evidence>
<evidence type="ECO:0000303" key="2">
    <source>
    </source>
</evidence>
<evidence type="ECO:0000305" key="3"/>
<evidence type="ECO:0000305" key="4">
    <source>
    </source>
</evidence>
<protein>
    <recommendedName>
        <fullName evidence="2">Zinc-type alcohol dehydrogenase-like protein YogA</fullName>
        <ecNumber evidence="4">1.-.-.-</ecNumber>
    </recommendedName>
    <alternativeName>
        <fullName evidence="2">Phomenoic acid biosynthesis cluster protein YogA</fullName>
    </alternativeName>
</protein>
<reference key="1">
    <citation type="journal article" date="2011" name="Nat. Commun.">
        <title>Effector diversification within compartments of the Leptosphaeria maculans genome affected by Repeat-Induced Point mutations.</title>
        <authorList>
            <person name="Rouxel T."/>
            <person name="Grandaubert J."/>
            <person name="Hane J.K."/>
            <person name="Hoede C."/>
            <person name="van de Wouw A.P."/>
            <person name="Couloux A."/>
            <person name="Dominguez V."/>
            <person name="Anthouard V."/>
            <person name="Bally P."/>
            <person name="Bourras S."/>
            <person name="Cozijnsen A.J."/>
            <person name="Ciuffetti L.M."/>
            <person name="Degrave A."/>
            <person name="Dilmaghani A."/>
            <person name="Duret L."/>
            <person name="Fudal I."/>
            <person name="Goodwin S.B."/>
            <person name="Gout L."/>
            <person name="Glaser N."/>
            <person name="Linglin J."/>
            <person name="Kema G.H.J."/>
            <person name="Lapalu N."/>
            <person name="Lawrence C.B."/>
            <person name="May K."/>
            <person name="Meyer M."/>
            <person name="Ollivier B."/>
            <person name="Poulain J."/>
            <person name="Schoch C.L."/>
            <person name="Simon A."/>
            <person name="Spatafora J.W."/>
            <person name="Stachowiak A."/>
            <person name="Turgeon B.G."/>
            <person name="Tyler B.M."/>
            <person name="Vincent D."/>
            <person name="Weissenbach J."/>
            <person name="Amselem J."/>
            <person name="Quesneville H."/>
            <person name="Oliver R.P."/>
            <person name="Wincker P."/>
            <person name="Balesdent M.-H."/>
            <person name="Howlett B.J."/>
        </authorList>
    </citation>
    <scope>NUCLEOTIDE SEQUENCE [LARGE SCALE GENOMIC DNA]</scope>
    <source>
        <strain>JN3 / isolate v23.1.3 / race Av1-4-5-6-7-8</strain>
    </source>
</reference>
<reference key="2">
    <citation type="journal article" date="2013" name="Fungal Genet. Biol.">
        <title>A gene cluster responsible for biosynthesis of phomenoic acid in the plant pathogenic fungus, Leptosphaeria maculans.</title>
        <authorList>
            <person name="Elliott C.E."/>
            <person name="Callahan D.L."/>
            <person name="Schwenk D."/>
            <person name="Nett M."/>
            <person name="Hoffmeister D."/>
            <person name="Howlett B.J."/>
        </authorList>
    </citation>
    <scope>IDENTIFICATION</scope>
    <scope>FUNCTION</scope>
    <scope>INDUCTION</scope>
    <scope>PATHWAY</scope>
</reference>
<comment type="function">
    <text evidence="1 4">Zinc-type alcohol dehydrogenase-like protein; part of the gene cluster that mediates the biosynthesis of phomenoic acid, a long chain aliphatic carboxylic acid that does not appear to be essential for pathogenicity but may play a role in allowing to outcompete other fungi in the environmental niche via its antifungal properties (PubMed:23396262). The polyketide synthase produces the long methylated aliphatic carboxylic acid chain of phomenoic acid (Probable). The cluster-specific cytochrome P450 monooxygenase may then hydroxylate the methyl group of carbon 31 (Probable). The putative dehydrogenase YogA, which has no obvious role in phomenoic acid biosynthesis, may further modify phomenoic acid to produce a compound not identified yet (Probable).</text>
</comment>
<comment type="pathway">
    <text evidence="4">Secondary metabolite biosynthesis.</text>
</comment>
<comment type="induction">
    <text evidence="1">Expression is positively regulated by the phomenoic acid biosynthesis cluster-specific transcription regulator C6TF.</text>
</comment>
<comment type="similarity">
    <text evidence="3">Belongs to the zinc-containing alcohol dehydrogenase family. Quinone oxidoreductase subfamily.</text>
</comment>
<dbReference type="EC" id="1.-.-.-" evidence="4"/>
<dbReference type="EMBL" id="FP929139">
    <property type="protein sequence ID" value="CBY01481.1"/>
    <property type="molecule type" value="Genomic_DNA"/>
</dbReference>
<dbReference type="RefSeq" id="XP_003844960.1">
    <property type="nucleotide sequence ID" value="XM_003844912.1"/>
</dbReference>
<dbReference type="SMR" id="E5AE42"/>
<dbReference type="STRING" id="985895.E5AE42"/>
<dbReference type="EnsemblFungi" id="CBY01481">
    <property type="protein sequence ID" value="CBY01481"/>
    <property type="gene ID" value="LEMA_P002680.1"/>
</dbReference>
<dbReference type="GeneID" id="13290522"/>
<dbReference type="VEuPathDB" id="FungiDB:LEMA_P002680.1"/>
<dbReference type="eggNOG" id="KOG1198">
    <property type="taxonomic scope" value="Eukaryota"/>
</dbReference>
<dbReference type="HOGENOM" id="CLU_026673_3_4_1"/>
<dbReference type="InParanoid" id="E5AE42"/>
<dbReference type="OMA" id="CGSAITY"/>
<dbReference type="OrthoDB" id="449487at2759"/>
<dbReference type="BRENDA" id="1.1.5.5">
    <property type="organism ID" value="2984"/>
</dbReference>
<dbReference type="Proteomes" id="UP000002668">
    <property type="component" value="Genome"/>
</dbReference>
<dbReference type="GO" id="GO:0016491">
    <property type="term" value="F:oxidoreductase activity"/>
    <property type="evidence" value="ECO:0007669"/>
    <property type="project" value="UniProtKB-KW"/>
</dbReference>
<dbReference type="CDD" id="cd08276">
    <property type="entry name" value="MDR7"/>
    <property type="match status" value="1"/>
</dbReference>
<dbReference type="FunFam" id="3.40.50.720:FF:000481">
    <property type="entry name" value="Alcohol dehydrogenase, variant"/>
    <property type="match status" value="1"/>
</dbReference>
<dbReference type="Gene3D" id="3.90.180.10">
    <property type="entry name" value="Medium-chain alcohol dehydrogenases, catalytic domain"/>
    <property type="match status" value="1"/>
</dbReference>
<dbReference type="Gene3D" id="3.40.50.720">
    <property type="entry name" value="NAD(P)-binding Rossmann-like Domain"/>
    <property type="match status" value="1"/>
</dbReference>
<dbReference type="InterPro" id="IPR013149">
    <property type="entry name" value="ADH-like_C"/>
</dbReference>
<dbReference type="InterPro" id="IPR013154">
    <property type="entry name" value="ADH-like_N"/>
</dbReference>
<dbReference type="InterPro" id="IPR011032">
    <property type="entry name" value="GroES-like_sf"/>
</dbReference>
<dbReference type="InterPro" id="IPR036291">
    <property type="entry name" value="NAD(P)-bd_dom_sf"/>
</dbReference>
<dbReference type="InterPro" id="IPR020843">
    <property type="entry name" value="PKS_ER"/>
</dbReference>
<dbReference type="InterPro" id="IPR052711">
    <property type="entry name" value="Zinc_ADH-like"/>
</dbReference>
<dbReference type="PANTHER" id="PTHR45033">
    <property type="match status" value="1"/>
</dbReference>
<dbReference type="PANTHER" id="PTHR45033:SF3">
    <property type="entry name" value="DEHYDROGENASE, PUTATIVE (AFU_ORTHOLOGUE AFUA_2G13270)-RELATED"/>
    <property type="match status" value="1"/>
</dbReference>
<dbReference type="Pfam" id="PF08240">
    <property type="entry name" value="ADH_N"/>
    <property type="match status" value="1"/>
</dbReference>
<dbReference type="Pfam" id="PF00107">
    <property type="entry name" value="ADH_zinc_N"/>
    <property type="match status" value="1"/>
</dbReference>
<dbReference type="SMART" id="SM00829">
    <property type="entry name" value="PKS_ER"/>
    <property type="match status" value="1"/>
</dbReference>
<dbReference type="SUPFAM" id="SSF50129">
    <property type="entry name" value="GroES-like"/>
    <property type="match status" value="1"/>
</dbReference>
<dbReference type="SUPFAM" id="SSF51735">
    <property type="entry name" value="NAD(P)-binding Rossmann-fold domains"/>
    <property type="match status" value="1"/>
</dbReference>
<name>YOGA_LEPMJ</name>
<organism>
    <name type="scientific">Leptosphaeria maculans (strain JN3 / isolate v23.1.3 / race Av1-4-5-6-7-8)</name>
    <name type="common">Blackleg fungus</name>
    <name type="synonym">Phoma lingam</name>
    <dbReference type="NCBI Taxonomy" id="985895"/>
    <lineage>
        <taxon>Eukaryota</taxon>
        <taxon>Fungi</taxon>
        <taxon>Dikarya</taxon>
        <taxon>Ascomycota</taxon>
        <taxon>Pezizomycotina</taxon>
        <taxon>Dothideomycetes</taxon>
        <taxon>Pleosporomycetidae</taxon>
        <taxon>Pleosporales</taxon>
        <taxon>Pleosporineae</taxon>
        <taxon>Leptosphaeriaceae</taxon>
        <taxon>Plenodomus</taxon>
        <taxon>Plenodomus lingam/Leptosphaeria maculans species complex</taxon>
    </lineage>
</organism>
<feature type="chain" id="PRO_0000446534" description="Zinc-type alcohol dehydrogenase-like protein YogA">
    <location>
        <begin position="1"/>
        <end position="358"/>
    </location>
</feature>
<proteinExistence type="evidence at transcript level"/>
<keyword id="KW-0560">Oxidoreductase</keyword>
<keyword id="KW-1185">Reference proteome</keyword>
<accession>E5AE42</accession>
<sequence length="358" mass="38409">MPFTLTLKPKKAKGGQVYYPLQLNVVSKPAPGPNEVLIQLEAAALNHRDFFLRQNLYPGLSFKSPMLSDGCGTVVELGPGCTTASNQLLGKKVILTPFRGWDSDPEGPEDYSNFSTIGGVEPHFDLGMAQNYISVHESEVELLPEHLNHIEGAALPCCGITAWRALVTKSGNAKPGRNILVTGIGGGVAIQTLLFGVAMGCNMYVSSSSDEKLAKARELGAVGTVNYKTDSDSWDKTLGSLLPAERPYLDAVIDGAGGNIVTKALTVLKPGGVIVCYGMTVGPVMDWPMQAALKNVDLRGTMVGSRAEFREMVEFISTHKIKPVISRTVRGLDCVDAIDGLFEDIRTGKQFGKLVIEI</sequence>